<dbReference type="EMBL" id="U21941">
    <property type="protein sequence ID" value="AAC54850.1"/>
    <property type="molecule type" value="Genomic_DNA"/>
</dbReference>
<dbReference type="EMBL" id="U22461">
    <property type="protein sequence ID" value="AAC54880.1"/>
    <property type="molecule type" value="Genomic_DNA"/>
</dbReference>
<dbReference type="SMR" id="P50804"/>
<dbReference type="IntAct" id="P50804">
    <property type="interactions" value="3"/>
</dbReference>
<dbReference type="MINT" id="P50804"/>
<dbReference type="Proteomes" id="UP000007677">
    <property type="component" value="Segment"/>
</dbReference>
<dbReference type="GO" id="GO:0030430">
    <property type="term" value="C:host cell cytoplasm"/>
    <property type="evidence" value="ECO:0007669"/>
    <property type="project" value="UniProtKB-SubCell"/>
</dbReference>
<dbReference type="GO" id="GO:0042025">
    <property type="term" value="C:host cell nucleus"/>
    <property type="evidence" value="ECO:0007669"/>
    <property type="project" value="UniProtKB-SubCell"/>
</dbReference>
<dbReference type="GO" id="GO:0003677">
    <property type="term" value="F:DNA binding"/>
    <property type="evidence" value="ECO:0007669"/>
    <property type="project" value="UniProtKB-UniRule"/>
</dbReference>
<dbReference type="GO" id="GO:0030165">
    <property type="term" value="F:PDZ domain binding"/>
    <property type="evidence" value="ECO:0007669"/>
    <property type="project" value="UniProtKB-UniRule"/>
</dbReference>
<dbReference type="GO" id="GO:0008270">
    <property type="term" value="F:zinc ion binding"/>
    <property type="evidence" value="ECO:0007669"/>
    <property type="project" value="UniProtKB-KW"/>
</dbReference>
<dbReference type="GO" id="GO:0006351">
    <property type="term" value="P:DNA-templated transcription"/>
    <property type="evidence" value="ECO:0007669"/>
    <property type="project" value="UniProtKB-UniRule"/>
</dbReference>
<dbReference type="GO" id="GO:0006355">
    <property type="term" value="P:regulation of DNA-templated transcription"/>
    <property type="evidence" value="ECO:0007669"/>
    <property type="project" value="UniProtKB-UniRule"/>
</dbReference>
<dbReference type="GO" id="GO:0052150">
    <property type="term" value="P:symbiont-mediated perturbation of host apoptosis"/>
    <property type="evidence" value="ECO:0007669"/>
    <property type="project" value="UniProtKB-KW"/>
</dbReference>
<dbReference type="GO" id="GO:0039648">
    <property type="term" value="P:symbiont-mediated perturbation of host ubiquitin-like protein modification"/>
    <property type="evidence" value="ECO:0007669"/>
    <property type="project" value="UniProtKB-UniRule"/>
</dbReference>
<dbReference type="GO" id="GO:0039548">
    <property type="term" value="P:symbiont-mediated suppression of host cytoplasmic pattern recognition receptor signaling pathway via inhibition of IRF3 activity"/>
    <property type="evidence" value="ECO:0007669"/>
    <property type="project" value="UniProtKB-UniRule"/>
</dbReference>
<dbReference type="GO" id="GO:0039502">
    <property type="term" value="P:symbiont-mediated suppression of host type I interferon-mediated signaling pathway"/>
    <property type="evidence" value="ECO:0007669"/>
    <property type="project" value="UniProtKB-UniRule"/>
</dbReference>
<dbReference type="FunFam" id="3.30.240.40:FF:000001">
    <property type="entry name" value="Protein E6"/>
    <property type="match status" value="1"/>
</dbReference>
<dbReference type="FunFam" id="3.30.240.40:FF:000002">
    <property type="entry name" value="Protein E6"/>
    <property type="match status" value="1"/>
</dbReference>
<dbReference type="Gene3D" id="3.30.240.40">
    <property type="entry name" value="E6 early regulatory protein"/>
    <property type="match status" value="2"/>
</dbReference>
<dbReference type="HAMAP" id="MF_04006">
    <property type="entry name" value="HPV_E6"/>
    <property type="match status" value="1"/>
</dbReference>
<dbReference type="InterPro" id="IPR001334">
    <property type="entry name" value="E6"/>
</dbReference>
<dbReference type="InterPro" id="IPR038575">
    <property type="entry name" value="E6_sf"/>
</dbReference>
<dbReference type="Pfam" id="PF00518">
    <property type="entry name" value="E6"/>
    <property type="match status" value="1"/>
</dbReference>
<dbReference type="SUPFAM" id="SSF161229">
    <property type="entry name" value="E6 C-terminal domain-like"/>
    <property type="match status" value="2"/>
</dbReference>
<feature type="chain" id="PRO_0000133382" description="Protein E6">
    <location>
        <begin position="1"/>
        <end position="158"/>
    </location>
</feature>
<feature type="zinc finger region" evidence="1">
    <location>
        <begin position="32"/>
        <end position="68"/>
    </location>
</feature>
<feature type="zinc finger region" evidence="1">
    <location>
        <begin position="105"/>
        <end position="141"/>
    </location>
</feature>
<feature type="short sequence motif" description="PDZ-binding domain" evidence="1">
    <location>
        <begin position="156"/>
        <end position="158"/>
    </location>
</feature>
<feature type="sequence conflict" description="In Ref. 2; AAC54880." evidence="2" ref="2">
    <original>N</original>
    <variation>D</variation>
    <location>
        <position position="100"/>
    </location>
</feature>
<evidence type="ECO:0000255" key="1">
    <source>
        <dbReference type="HAMAP-Rule" id="MF_04006"/>
    </source>
</evidence>
<evidence type="ECO:0000305" key="2"/>
<accession>P50804</accession>
<proteinExistence type="evidence at protein level"/>
<name>VE6_HPV70</name>
<comment type="function">
    <text evidence="1">Plays a major role in the induction and maintenance of cellular transformation. Acts mainly as an oncoprotein by stimulating the destruction of many host cell key regulatory proteins. E6 associates with host UBE3A/E6-AP ubiquitin-protein ligase, and inactivates tumor suppressors TP53 and TP73 by targeting them to the 26S proteasome for degradation. In turn, DNA damage and chromosomal instabilities increase and lead to cell proliferation and cancer development. The complex E6/E6AP targets several other substrates to degradation via the proteasome including host DLG1 or NFX1, a repressor of human telomerase reverse transcriptase (hTERT). The resulting increased expression of hTERT prevents the shortening of telomere length leading to cell immortalization. Other cellular targets including BAK1, Fas-associated death domain-containing protein (FADD) and procaspase 8, are degraded by E6/E6AP causing inhibition of apoptosis. E6 also inhibits immune response by interacting with host IRF3 and TYK2. These interactions prevent IRF3 transcriptional activities and inhibit TYK2-mediated JAK-STAT activation by interferon alpha resulting in inhibition of the interferon signaling pathway.</text>
</comment>
<comment type="subunit">
    <text evidence="1">Forms homodimers. Interacts with ubiquitin-protein ligase UBE3A/E6-AP and thus forms a complex with human TP53. Interacts with human NFX1 and MAGI3. Interacts with human IRF3; this interaction inhibits the establishment of antiviral state. Interacts with human TYK2; this interaction inhibits JAK-STAT activation by interferon alpha. Interacts with host DLG1; this interaction leads to the proteasomal degradation of DLG1.</text>
</comment>
<comment type="interaction">
    <interactant intactId="EBI-11793696">
        <id>P50804</id>
    </interactant>
    <interactant intactId="EBI-357481">
        <id>Q12959</id>
        <label>DLG1</label>
    </interactant>
    <organismsDiffer>true</organismsDiffer>
    <experiments>3</experiments>
</comment>
<comment type="subcellular location">
    <subcellularLocation>
        <location evidence="1">Host cytoplasm</location>
    </subcellularLocation>
    <subcellularLocation>
        <location evidence="1">Host nucleus</location>
    </subcellularLocation>
</comment>
<comment type="miscellaneous">
    <text evidence="1">Belongs to the high risk human alphapapillomavirus family. The cancer-causing human papillomavirus E6 protein has a unique carboxy terminal PDZ domain containing substrate.</text>
</comment>
<comment type="similarity">
    <text evidence="2">Belongs to the papillomaviridae E6 protein family.</text>
</comment>
<keyword id="KW-0010">Activator</keyword>
<keyword id="KW-0238">DNA-binding</keyword>
<keyword id="KW-0244">Early protein</keyword>
<keyword id="KW-1035">Host cytoplasm</keyword>
<keyword id="KW-1048">Host nucleus</keyword>
<keyword id="KW-0945">Host-virus interaction</keyword>
<keyword id="KW-1090">Inhibition of host innate immune response by virus</keyword>
<keyword id="KW-1092">Inhibition of host IRF3 by virus</keyword>
<keyword id="KW-1113">Inhibition of host RLR pathway by virus</keyword>
<keyword id="KW-0479">Metal-binding</keyword>
<keyword id="KW-1119">Modulation of host cell apoptosis by virus</keyword>
<keyword id="KW-0553">Oncogene</keyword>
<keyword id="KW-1185">Reference proteome</keyword>
<keyword id="KW-0804">Transcription</keyword>
<keyword id="KW-0805">Transcription regulation</keyword>
<keyword id="KW-0899">Viral immunoevasion</keyword>
<keyword id="KW-0862">Zinc</keyword>
<keyword id="KW-0863">Zinc-finger</keyword>
<organismHost>
    <name type="scientific">Homo sapiens</name>
    <name type="common">Human</name>
    <dbReference type="NCBI Taxonomy" id="9606"/>
</organismHost>
<reference key="1">
    <citation type="journal article" date="1996" name="J. Clin. Microbiol.">
        <title>Human papillomavirus type 70 genome cloned from overlapping PCR products: complete nucleotide sequence and genomic organization.</title>
        <authorList>
            <person name="Forslund O."/>
            <person name="Hansson B.G."/>
        </authorList>
    </citation>
    <scope>NUCLEOTIDE SEQUENCE [GENOMIC DNA]</scope>
</reference>
<reference key="2">
    <citation type="journal article" date="1996" name="J. Clin. Microbiol.">
        <title>Two novel genital human papillomavirus (HPV) types, HPV68 and HPV70, related to the potentially oncogenic HPV39.</title>
        <authorList>
            <person name="Longuet M."/>
            <person name="Beaudenon S."/>
            <person name="Orth G."/>
        </authorList>
    </citation>
    <scope>NUCLEOTIDE SEQUENCE [GENOMIC DNA]</scope>
</reference>
<protein>
    <recommendedName>
        <fullName evidence="1">Protein E6</fullName>
    </recommendedName>
</protein>
<organism>
    <name type="scientific">Human papillomavirus type 70</name>
    <dbReference type="NCBI Taxonomy" id="39457"/>
    <lineage>
        <taxon>Viruses</taxon>
        <taxon>Monodnaviria</taxon>
        <taxon>Shotokuvirae</taxon>
        <taxon>Cossaviricota</taxon>
        <taxon>Papovaviricetes</taxon>
        <taxon>Zurhausenvirales</taxon>
        <taxon>Papillomaviridae</taxon>
        <taxon>Firstpapillomavirinae</taxon>
        <taxon>Alphapapillomavirus</taxon>
        <taxon>Alphapapillomavirus 7</taxon>
    </lineage>
</organism>
<sequence>MARFPNPAERPYKLPDLCTALDTTLHDITIDCVYCKTQLQQTEVYEFAFSDLFIVYRNGEPYAACQKCIKFHAKVRELRHYSNSVYATTLESITNTKLYNLSIRCMSCLKPLCPAEKLRHVNTKRRFHQIAGSYTGQCRHCWTSNREDRRRIRRETQV</sequence>
<gene>
    <name evidence="1" type="primary">E6</name>
</gene>